<proteinExistence type="inferred from homology"/>
<feature type="chain" id="PRO_0000361222" description="Putative S-adenosyl-L-methionine-dependent methyltransferase MRA_0152">
    <location>
        <begin position="1"/>
        <end position="311"/>
    </location>
</feature>
<feature type="binding site" evidence="1">
    <location>
        <position position="135"/>
    </location>
    <ligand>
        <name>S-adenosyl-L-methionine</name>
        <dbReference type="ChEBI" id="CHEBI:59789"/>
    </ligand>
</feature>
<feature type="binding site" evidence="1">
    <location>
        <begin position="164"/>
        <end position="165"/>
    </location>
    <ligand>
        <name>S-adenosyl-L-methionine</name>
        <dbReference type="ChEBI" id="CHEBI:59789"/>
    </ligand>
</feature>
<evidence type="ECO:0000250" key="1"/>
<evidence type="ECO:0000305" key="2"/>
<comment type="function">
    <text evidence="1">Exhibits S-adenosyl-L-methionine-dependent methyltransferase activity.</text>
</comment>
<comment type="similarity">
    <text evidence="2">Belongs to the UPF0677 family.</text>
</comment>
<comment type="sequence caution" evidence="2">
    <conflict type="erroneous initiation">
        <sequence resource="EMBL-CDS" id="ABQ71870"/>
    </conflict>
</comment>
<sequence length="311" mass="33709">MSSLPSSRRTAGDTWAITESVGATALGVAAARAVETAATNPLIRDEFAKVLVSSAGTAWARLADADLAWLDGDQLGRRVHRVACDYQAVRTHFFDEYFGAAVDAGVRQVVILAAGLDARAYRLNWPAGTVVYEIDQPSVLEYKAGILQSHGAVPTARRHAVAVDLRDDWPAALIAAGFDGTQPTAWLAEGLLPYLPGDAADRLFDMVTALSAPGSQVAVEAFTMNTKGNTQRWNRMRERLGLDIDVQALTYHEPDRSDAAQWLATHGWQVHSVSNREEMARLGRAIPQDLVDETVRTTLLRGRLVTPAQPA</sequence>
<organism>
    <name type="scientific">Mycobacterium tuberculosis (strain ATCC 25177 / H37Ra)</name>
    <dbReference type="NCBI Taxonomy" id="419947"/>
    <lineage>
        <taxon>Bacteria</taxon>
        <taxon>Bacillati</taxon>
        <taxon>Actinomycetota</taxon>
        <taxon>Actinomycetes</taxon>
        <taxon>Mycobacteriales</taxon>
        <taxon>Mycobacteriaceae</taxon>
        <taxon>Mycobacterium</taxon>
        <taxon>Mycobacterium tuberculosis complex</taxon>
    </lineage>
</organism>
<protein>
    <recommendedName>
        <fullName>Putative S-adenosyl-L-methionine-dependent methyltransferase MRA_0152</fullName>
        <ecNumber>2.1.1.-</ecNumber>
    </recommendedName>
</protein>
<accession>A5TYM0</accession>
<name>Y152_MYCTA</name>
<dbReference type="EC" id="2.1.1.-"/>
<dbReference type="EMBL" id="CP000611">
    <property type="protein sequence ID" value="ABQ71870.1"/>
    <property type="status" value="ALT_INIT"/>
    <property type="molecule type" value="Genomic_DNA"/>
</dbReference>
<dbReference type="SMR" id="A5TYM0"/>
<dbReference type="KEGG" id="mra:MRA_0152"/>
<dbReference type="eggNOG" id="COG3315">
    <property type="taxonomic scope" value="Bacteria"/>
</dbReference>
<dbReference type="HOGENOM" id="CLU_056160_2_1_11"/>
<dbReference type="Proteomes" id="UP000001988">
    <property type="component" value="Chromosome"/>
</dbReference>
<dbReference type="GO" id="GO:0008168">
    <property type="term" value="F:methyltransferase activity"/>
    <property type="evidence" value="ECO:0007669"/>
    <property type="project" value="UniProtKB-KW"/>
</dbReference>
<dbReference type="GO" id="GO:0032259">
    <property type="term" value="P:methylation"/>
    <property type="evidence" value="ECO:0007669"/>
    <property type="project" value="UniProtKB-KW"/>
</dbReference>
<dbReference type="Gene3D" id="3.40.50.150">
    <property type="entry name" value="Vaccinia Virus protein VP39"/>
    <property type="match status" value="1"/>
</dbReference>
<dbReference type="InterPro" id="IPR007213">
    <property type="entry name" value="Ppm1/Ppm2/Tcmp"/>
</dbReference>
<dbReference type="InterPro" id="IPR029063">
    <property type="entry name" value="SAM-dependent_MTases_sf"/>
</dbReference>
<dbReference type="InterPro" id="IPR011610">
    <property type="entry name" value="SAM_mthyl_Trfase_ML2640-like"/>
</dbReference>
<dbReference type="NCBIfam" id="TIGR00027">
    <property type="entry name" value="mthyl_TIGR00027"/>
    <property type="match status" value="1"/>
</dbReference>
<dbReference type="PANTHER" id="PTHR43619">
    <property type="entry name" value="S-ADENOSYL-L-METHIONINE-DEPENDENT METHYLTRANSFERASE YKTD-RELATED"/>
    <property type="match status" value="1"/>
</dbReference>
<dbReference type="PANTHER" id="PTHR43619:SF2">
    <property type="entry name" value="S-ADENOSYL-L-METHIONINE-DEPENDENT METHYLTRANSFERASES SUPERFAMILY PROTEIN"/>
    <property type="match status" value="1"/>
</dbReference>
<dbReference type="Pfam" id="PF04072">
    <property type="entry name" value="LCM"/>
    <property type="match status" value="1"/>
</dbReference>
<dbReference type="SUPFAM" id="SSF53335">
    <property type="entry name" value="S-adenosyl-L-methionine-dependent methyltransferases"/>
    <property type="match status" value="1"/>
</dbReference>
<gene>
    <name type="ordered locus">MRA_0152</name>
</gene>
<reference key="1">
    <citation type="journal article" date="2008" name="PLoS ONE">
        <title>Genetic basis of virulence attenuation revealed by comparative genomic analysis of Mycobacterium tuberculosis strain H37Ra versus H37Rv.</title>
        <authorList>
            <person name="Zheng H."/>
            <person name="Lu L."/>
            <person name="Wang B."/>
            <person name="Pu S."/>
            <person name="Zhang X."/>
            <person name="Zhu G."/>
            <person name="Shi W."/>
            <person name="Zhang L."/>
            <person name="Wang H."/>
            <person name="Wang S."/>
            <person name="Zhao G."/>
            <person name="Zhang Y."/>
        </authorList>
    </citation>
    <scope>NUCLEOTIDE SEQUENCE [LARGE SCALE GENOMIC DNA]</scope>
    <source>
        <strain>ATCC 25177 / H37Ra</strain>
    </source>
</reference>
<keyword id="KW-0489">Methyltransferase</keyword>
<keyword id="KW-1185">Reference proteome</keyword>
<keyword id="KW-0949">S-adenosyl-L-methionine</keyword>
<keyword id="KW-0808">Transferase</keyword>